<gene>
    <name type="primary">luxS</name>
    <name type="ordered locus">CPE0178</name>
</gene>
<dbReference type="EC" id="4.4.1.21"/>
<dbReference type="EMBL" id="AB028629">
    <property type="protein sequence ID" value="BAA81641.1"/>
    <property type="molecule type" value="Genomic_DNA"/>
</dbReference>
<dbReference type="EMBL" id="BA000016">
    <property type="protein sequence ID" value="BAB79884.1"/>
    <property type="molecule type" value="Genomic_DNA"/>
</dbReference>
<dbReference type="PIR" id="T43793">
    <property type="entry name" value="T43793"/>
</dbReference>
<dbReference type="RefSeq" id="WP_003452649.1">
    <property type="nucleotide sequence ID" value="NC_003366.1"/>
</dbReference>
<dbReference type="SMR" id="Q9XDU6"/>
<dbReference type="STRING" id="195102.gene:10489422"/>
<dbReference type="KEGG" id="cpe:CPE0178"/>
<dbReference type="HOGENOM" id="CLU_107531_2_0_9"/>
<dbReference type="Proteomes" id="UP000000818">
    <property type="component" value="Chromosome"/>
</dbReference>
<dbReference type="GO" id="GO:0005506">
    <property type="term" value="F:iron ion binding"/>
    <property type="evidence" value="ECO:0007669"/>
    <property type="project" value="InterPro"/>
</dbReference>
<dbReference type="GO" id="GO:0043768">
    <property type="term" value="F:S-ribosylhomocysteine lyase activity"/>
    <property type="evidence" value="ECO:0007669"/>
    <property type="project" value="UniProtKB-UniRule"/>
</dbReference>
<dbReference type="GO" id="GO:0009372">
    <property type="term" value="P:quorum sensing"/>
    <property type="evidence" value="ECO:0007669"/>
    <property type="project" value="UniProtKB-UniRule"/>
</dbReference>
<dbReference type="Gene3D" id="3.30.1360.80">
    <property type="entry name" value="S-ribosylhomocysteinase (LuxS)"/>
    <property type="match status" value="1"/>
</dbReference>
<dbReference type="HAMAP" id="MF_00091">
    <property type="entry name" value="LuxS"/>
    <property type="match status" value="1"/>
</dbReference>
<dbReference type="InterPro" id="IPR037005">
    <property type="entry name" value="LuxS_sf"/>
</dbReference>
<dbReference type="InterPro" id="IPR011249">
    <property type="entry name" value="Metalloenz_LuxS/M16"/>
</dbReference>
<dbReference type="InterPro" id="IPR003815">
    <property type="entry name" value="S-ribosylhomocysteinase"/>
</dbReference>
<dbReference type="NCBIfam" id="NF002604">
    <property type="entry name" value="PRK02260.1-4"/>
    <property type="match status" value="1"/>
</dbReference>
<dbReference type="NCBIfam" id="NF002606">
    <property type="entry name" value="PRK02260.2-4"/>
    <property type="match status" value="1"/>
</dbReference>
<dbReference type="PANTHER" id="PTHR35799">
    <property type="entry name" value="S-RIBOSYLHOMOCYSTEINE LYASE"/>
    <property type="match status" value="1"/>
</dbReference>
<dbReference type="PANTHER" id="PTHR35799:SF1">
    <property type="entry name" value="S-RIBOSYLHOMOCYSTEINE LYASE"/>
    <property type="match status" value="1"/>
</dbReference>
<dbReference type="Pfam" id="PF02664">
    <property type="entry name" value="LuxS"/>
    <property type="match status" value="1"/>
</dbReference>
<dbReference type="PIRSF" id="PIRSF006160">
    <property type="entry name" value="AI2"/>
    <property type="match status" value="1"/>
</dbReference>
<dbReference type="PRINTS" id="PR01487">
    <property type="entry name" value="LUXSPROTEIN"/>
</dbReference>
<dbReference type="SUPFAM" id="SSF63411">
    <property type="entry name" value="LuxS/MPP-like metallohydrolase"/>
    <property type="match status" value="1"/>
</dbReference>
<comment type="function">
    <text evidence="2">Involved in the synthesis of autoinducer 2 (AI-2) which is secreted by bacteria and is used to communicate both the cell density and the metabolic potential of the environment. The regulation of gene expression in response to changes in cell density is called quorum sensing. Catalyzes the transformation of S-ribosylhomocysteine (RHC) to homocysteine (HC) and 4,5-dihydroxy-2,3-pentadione (DPD).</text>
</comment>
<comment type="catalytic activity">
    <reaction>
        <text>S-(5-deoxy-D-ribos-5-yl)-L-homocysteine = (S)-4,5-dihydroxypentane-2,3-dione + L-homocysteine</text>
        <dbReference type="Rhea" id="RHEA:17753"/>
        <dbReference type="ChEBI" id="CHEBI:29484"/>
        <dbReference type="ChEBI" id="CHEBI:58195"/>
        <dbReference type="ChEBI" id="CHEBI:58199"/>
        <dbReference type="EC" id="4.4.1.21"/>
    </reaction>
</comment>
<comment type="cofactor">
    <cofactor evidence="1">
        <name>Fe cation</name>
        <dbReference type="ChEBI" id="CHEBI:24875"/>
    </cofactor>
    <text evidence="1">Binds 1 Fe cation per subunit.</text>
</comment>
<comment type="subunit">
    <text evidence="1">Homodimer.</text>
</comment>
<comment type="similarity">
    <text evidence="3">Belongs to the LuxS family.</text>
</comment>
<name>LUXS_CLOPE</name>
<reference key="1">
    <citation type="journal article" date="2000" name="Mol. Microbiol.">
        <title>Identification of novel VirR/VirS-regulated genes in Clostridium perfringens.</title>
        <authorList>
            <person name="Banu S."/>
            <person name="Ohtani K."/>
            <person name="Yaguchi H."/>
            <person name="Swe T."/>
            <person name="Cole S.T."/>
            <person name="Hayashi H."/>
            <person name="Shimizu T."/>
        </authorList>
    </citation>
    <scope>NUCLEOTIDE SEQUENCE [GENOMIC DNA]</scope>
    <source>
        <strain>13 / Type A</strain>
    </source>
</reference>
<reference key="2">
    <citation type="journal article" date="2002" name="Proc. Natl. Acad. Sci. U.S.A.">
        <title>Complete genome sequence of Clostridium perfringens, an anaerobic flesh-eater.</title>
        <authorList>
            <person name="Shimizu T."/>
            <person name="Ohtani K."/>
            <person name="Hirakawa H."/>
            <person name="Ohshima K."/>
            <person name="Yamashita A."/>
            <person name="Shiba T."/>
            <person name="Ogasawara N."/>
            <person name="Hattori M."/>
            <person name="Kuhara S."/>
            <person name="Hayashi H."/>
        </authorList>
    </citation>
    <scope>NUCLEOTIDE SEQUENCE [LARGE SCALE GENOMIC DNA]</scope>
    <source>
        <strain>13 / Type A</strain>
    </source>
</reference>
<reference key="3">
    <citation type="journal article" date="2002" name="Mol. Microbiol.">
        <title>The luxS gene is involved in cell-cell signalling for toxin production in Clostridium perfringens.</title>
        <authorList>
            <person name="Ohtani K."/>
            <person name="Hayashi H."/>
            <person name="Shimizu T."/>
        </authorList>
    </citation>
    <scope>FUNCTION</scope>
</reference>
<protein>
    <recommendedName>
        <fullName>S-ribosylhomocysteine lyase</fullName>
        <ecNumber>4.4.1.21</ecNumber>
    </recommendedName>
    <alternativeName>
        <fullName>AI-2 synthesis protein</fullName>
    </alternativeName>
    <alternativeName>
        <fullName>Autoinducer-2 production protein LuxS</fullName>
    </alternativeName>
</protein>
<evidence type="ECO:0000250" key="1"/>
<evidence type="ECO:0000269" key="2">
    <source>
    </source>
</evidence>
<evidence type="ECO:0000305" key="3"/>
<keyword id="KW-0071">Autoinducer synthesis</keyword>
<keyword id="KW-0408">Iron</keyword>
<keyword id="KW-0456">Lyase</keyword>
<keyword id="KW-0479">Metal-binding</keyword>
<keyword id="KW-0673">Quorum sensing</keyword>
<keyword id="KW-1185">Reference proteome</keyword>
<feature type="chain" id="PRO_0000172217" description="S-ribosylhomocysteine lyase">
    <location>
        <begin position="1"/>
        <end position="151"/>
    </location>
</feature>
<feature type="binding site" evidence="1">
    <location>
        <position position="54"/>
    </location>
    <ligand>
        <name>Fe cation</name>
        <dbReference type="ChEBI" id="CHEBI:24875"/>
    </ligand>
</feature>
<feature type="binding site" evidence="1">
    <location>
        <position position="58"/>
    </location>
    <ligand>
        <name>Fe cation</name>
        <dbReference type="ChEBI" id="CHEBI:24875"/>
    </ligand>
</feature>
<feature type="binding site" evidence="1">
    <location>
        <position position="121"/>
    </location>
    <ligand>
        <name>Fe cation</name>
        <dbReference type="ChEBI" id="CHEBI:24875"/>
    </ligand>
</feature>
<accession>Q9XDU6</accession>
<sequence>MVKVESFELDHTKVKAPYVRKAGIKIGPKGDIVSKFDLRFVQPNKELLSDKGMHTLEHFLAGFMREKLDDVIDISPMGCKTGFYLTSFGDIDVKDIIEALEYSLSKVLEQEEIPAANELQCGSAKLHSLELAKSHAKQVLENGISDKFYVE</sequence>
<proteinExistence type="inferred from homology"/>
<organism>
    <name type="scientific">Clostridium perfringens (strain 13 / Type A)</name>
    <dbReference type="NCBI Taxonomy" id="195102"/>
    <lineage>
        <taxon>Bacteria</taxon>
        <taxon>Bacillati</taxon>
        <taxon>Bacillota</taxon>
        <taxon>Clostridia</taxon>
        <taxon>Eubacteriales</taxon>
        <taxon>Clostridiaceae</taxon>
        <taxon>Clostridium</taxon>
    </lineage>
</organism>